<evidence type="ECO:0000250" key="1"/>
<evidence type="ECO:0000256" key="2">
    <source>
        <dbReference type="SAM" id="MobiDB-lite"/>
    </source>
</evidence>
<evidence type="ECO:0000305" key="3"/>
<dbReference type="EMBL" id="CU329670">
    <property type="protein sequence ID" value="CAA92389.1"/>
    <property type="molecule type" value="Genomic_DNA"/>
</dbReference>
<dbReference type="PIR" id="T37924">
    <property type="entry name" value="T37924"/>
</dbReference>
<dbReference type="RefSeq" id="NP_593674.1">
    <property type="nucleotide sequence ID" value="NM_001019106.2"/>
</dbReference>
<dbReference type="SMR" id="Q10110"/>
<dbReference type="BioGRID" id="278969">
    <property type="interactions" value="3"/>
</dbReference>
<dbReference type="FunCoup" id="Q10110">
    <property type="interactions" value="621"/>
</dbReference>
<dbReference type="STRING" id="284812.Q10110"/>
<dbReference type="iPTMnet" id="Q10110"/>
<dbReference type="PaxDb" id="4896-SPAC18G6.11c.1"/>
<dbReference type="EnsemblFungi" id="SPAC18G6.11c.1">
    <property type="protein sequence ID" value="SPAC18G6.11c.1:pep"/>
    <property type="gene ID" value="SPAC18G6.11c"/>
</dbReference>
<dbReference type="PomBase" id="SPAC18G6.11c">
    <property type="gene designation" value="rrn3"/>
</dbReference>
<dbReference type="VEuPathDB" id="FungiDB:SPAC18G6.11c"/>
<dbReference type="eggNOG" id="KOG2434">
    <property type="taxonomic scope" value="Eukaryota"/>
</dbReference>
<dbReference type="HOGENOM" id="CLU_010579_0_0_1"/>
<dbReference type="InParanoid" id="Q10110"/>
<dbReference type="OMA" id="VCSPAIV"/>
<dbReference type="PhylomeDB" id="Q10110"/>
<dbReference type="Reactome" id="R-SPO-73762">
    <property type="pathway name" value="RNA Polymerase I Transcription Initiation"/>
</dbReference>
<dbReference type="Reactome" id="R-SPO-73772">
    <property type="pathway name" value="RNA Polymerase I Promoter Escape"/>
</dbReference>
<dbReference type="PRO" id="PR:Q10110"/>
<dbReference type="Proteomes" id="UP000002485">
    <property type="component" value="Chromosome I"/>
</dbReference>
<dbReference type="GO" id="GO:0005829">
    <property type="term" value="C:cytosol"/>
    <property type="evidence" value="ECO:0007005"/>
    <property type="project" value="PomBase"/>
</dbReference>
<dbReference type="GO" id="GO:0005634">
    <property type="term" value="C:nucleus"/>
    <property type="evidence" value="ECO:0007005"/>
    <property type="project" value="PomBase"/>
</dbReference>
<dbReference type="GO" id="GO:0000120">
    <property type="term" value="C:RNA polymerase I transcription regulator complex"/>
    <property type="evidence" value="ECO:0000305"/>
    <property type="project" value="PomBase"/>
</dbReference>
<dbReference type="GO" id="GO:0001042">
    <property type="term" value="F:RNA polymerase I core binding"/>
    <property type="evidence" value="ECO:0000318"/>
    <property type="project" value="GO_Central"/>
</dbReference>
<dbReference type="GO" id="GO:0001181">
    <property type="term" value="F:RNA polymerase I general transcription initiation factor activity"/>
    <property type="evidence" value="ECO:0000314"/>
    <property type="project" value="PomBase"/>
</dbReference>
<dbReference type="GO" id="GO:0006361">
    <property type="term" value="P:transcription initiation at RNA polymerase I promoter"/>
    <property type="evidence" value="ECO:0000315"/>
    <property type="project" value="PomBase"/>
</dbReference>
<dbReference type="InterPro" id="IPR016024">
    <property type="entry name" value="ARM-type_fold"/>
</dbReference>
<dbReference type="InterPro" id="IPR007991">
    <property type="entry name" value="RNA_pol_I_trans_ini_fac_RRN3"/>
</dbReference>
<dbReference type="PANTHER" id="PTHR12790:SF0">
    <property type="entry name" value="RNA POLYMERASE I-SPECIFIC TRANSCRIPTION INITIATION FACTOR RRN3-RELATED"/>
    <property type="match status" value="1"/>
</dbReference>
<dbReference type="PANTHER" id="PTHR12790">
    <property type="entry name" value="TRANSCRIPTION INITIATION FACTOR IA RRN3"/>
    <property type="match status" value="1"/>
</dbReference>
<dbReference type="Pfam" id="PF05327">
    <property type="entry name" value="RRN3"/>
    <property type="match status" value="1"/>
</dbReference>
<dbReference type="SUPFAM" id="SSF48371">
    <property type="entry name" value="ARM repeat"/>
    <property type="match status" value="1"/>
</dbReference>
<organism>
    <name type="scientific">Schizosaccharomyces pombe (strain 972 / ATCC 24843)</name>
    <name type="common">Fission yeast</name>
    <dbReference type="NCBI Taxonomy" id="284812"/>
    <lineage>
        <taxon>Eukaryota</taxon>
        <taxon>Fungi</taxon>
        <taxon>Dikarya</taxon>
        <taxon>Ascomycota</taxon>
        <taxon>Taphrinomycotina</taxon>
        <taxon>Schizosaccharomycetes</taxon>
        <taxon>Schizosaccharomycetales</taxon>
        <taxon>Schizosaccharomycetaceae</taxon>
        <taxon>Schizosaccharomyces</taxon>
    </lineage>
</organism>
<reference key="1">
    <citation type="journal article" date="2002" name="Nature">
        <title>The genome sequence of Schizosaccharomyces pombe.</title>
        <authorList>
            <person name="Wood V."/>
            <person name="Gwilliam R."/>
            <person name="Rajandream M.A."/>
            <person name="Lyne M.H."/>
            <person name="Lyne R."/>
            <person name="Stewart A."/>
            <person name="Sgouros J.G."/>
            <person name="Peat N."/>
            <person name="Hayles J."/>
            <person name="Baker S.G."/>
            <person name="Basham D."/>
            <person name="Bowman S."/>
            <person name="Brooks K."/>
            <person name="Brown D."/>
            <person name="Brown S."/>
            <person name="Chillingworth T."/>
            <person name="Churcher C.M."/>
            <person name="Collins M."/>
            <person name="Connor R."/>
            <person name="Cronin A."/>
            <person name="Davis P."/>
            <person name="Feltwell T."/>
            <person name="Fraser A."/>
            <person name="Gentles S."/>
            <person name="Goble A."/>
            <person name="Hamlin N."/>
            <person name="Harris D.E."/>
            <person name="Hidalgo J."/>
            <person name="Hodgson G."/>
            <person name="Holroyd S."/>
            <person name="Hornsby T."/>
            <person name="Howarth S."/>
            <person name="Huckle E.J."/>
            <person name="Hunt S."/>
            <person name="Jagels K."/>
            <person name="James K.D."/>
            <person name="Jones L."/>
            <person name="Jones M."/>
            <person name="Leather S."/>
            <person name="McDonald S."/>
            <person name="McLean J."/>
            <person name="Mooney P."/>
            <person name="Moule S."/>
            <person name="Mungall K.L."/>
            <person name="Murphy L.D."/>
            <person name="Niblett D."/>
            <person name="Odell C."/>
            <person name="Oliver K."/>
            <person name="O'Neil S."/>
            <person name="Pearson D."/>
            <person name="Quail M.A."/>
            <person name="Rabbinowitsch E."/>
            <person name="Rutherford K.M."/>
            <person name="Rutter S."/>
            <person name="Saunders D."/>
            <person name="Seeger K."/>
            <person name="Sharp S."/>
            <person name="Skelton J."/>
            <person name="Simmonds M.N."/>
            <person name="Squares R."/>
            <person name="Squares S."/>
            <person name="Stevens K."/>
            <person name="Taylor K."/>
            <person name="Taylor R.G."/>
            <person name="Tivey A."/>
            <person name="Walsh S.V."/>
            <person name="Warren T."/>
            <person name="Whitehead S."/>
            <person name="Woodward J.R."/>
            <person name="Volckaert G."/>
            <person name="Aert R."/>
            <person name="Robben J."/>
            <person name="Grymonprez B."/>
            <person name="Weltjens I."/>
            <person name="Vanstreels E."/>
            <person name="Rieger M."/>
            <person name="Schaefer M."/>
            <person name="Mueller-Auer S."/>
            <person name="Gabel C."/>
            <person name="Fuchs M."/>
            <person name="Duesterhoeft A."/>
            <person name="Fritzc C."/>
            <person name="Holzer E."/>
            <person name="Moestl D."/>
            <person name="Hilbert H."/>
            <person name="Borzym K."/>
            <person name="Langer I."/>
            <person name="Beck A."/>
            <person name="Lehrach H."/>
            <person name="Reinhardt R."/>
            <person name="Pohl T.M."/>
            <person name="Eger P."/>
            <person name="Zimmermann W."/>
            <person name="Wedler H."/>
            <person name="Wambutt R."/>
            <person name="Purnelle B."/>
            <person name="Goffeau A."/>
            <person name="Cadieu E."/>
            <person name="Dreano S."/>
            <person name="Gloux S."/>
            <person name="Lelaure V."/>
            <person name="Mottier S."/>
            <person name="Galibert F."/>
            <person name="Aves S.J."/>
            <person name="Xiang Z."/>
            <person name="Hunt C."/>
            <person name="Moore K."/>
            <person name="Hurst S.M."/>
            <person name="Lucas M."/>
            <person name="Rochet M."/>
            <person name="Gaillardin C."/>
            <person name="Tallada V.A."/>
            <person name="Garzon A."/>
            <person name="Thode G."/>
            <person name="Daga R.R."/>
            <person name="Cruzado L."/>
            <person name="Jimenez J."/>
            <person name="Sanchez M."/>
            <person name="del Rey F."/>
            <person name="Benito J."/>
            <person name="Dominguez A."/>
            <person name="Revuelta J.L."/>
            <person name="Moreno S."/>
            <person name="Armstrong J."/>
            <person name="Forsburg S.L."/>
            <person name="Cerutti L."/>
            <person name="Lowe T."/>
            <person name="McCombie W.R."/>
            <person name="Paulsen I."/>
            <person name="Potashkin J."/>
            <person name="Shpakovski G.V."/>
            <person name="Ussery D."/>
            <person name="Barrell B.G."/>
            <person name="Nurse P."/>
        </authorList>
    </citation>
    <scope>NUCLEOTIDE SEQUENCE [LARGE SCALE GENOMIC DNA]</scope>
    <source>
        <strain>972 / ATCC 24843</strain>
    </source>
</reference>
<name>RRN3_SCHPO</name>
<sequence length="599" mass="68555">MPSIISSTNPQYINKCVNNGTMASSTNVPDRTVGSKSFASSVSKNDGRLMQQMLRAFVNKALDDKAEGNFAGYEDLRRQFAAKSDTKDAPSSLQLQNLLSALTCNVSRLDSSNSSLVMSVLDSVWVSRDESFVRCYTRFLGNLISAQSNYLPLVMTMLIQHMLYRPDSLAIHYEHAHMALKYVLELVPRAHSFLYSSILEEFPYKDESLLAQMTYISNVLSICEYVPSIKGPVLHAIIDKIIQIDVEIQVEVDDDDEEEDEVVTDDDGTSNADSEVITASTLYERHTAISSEMTSSTILTPPSLTDTRQLMQQLDQLLYTLFSYLDSNLKSTSRDRYLVYNSLIKSFVNTVLKTFRCRYTQFLIFWASQLDPEFTDIFLGVLTEVCLDPSQPYTLRLSGAMYIGSYVARAKALEKNTIQIIVNMMTRWVEAYLDQCENELSDDLLSKHSVFYAINQSIFYIFCFRWRELCVSDESESMEPRPNEWIPGLEILHRSVLSRLNPLRYCSPNIVLQFAKVANHLNFMYVYSIIEQNRKGIFREGFDTMDAYFPFDPYRLTKSSIIVQPFYNEWQQIPGLDDDEEEEDTDYESSTVMLGESPF</sequence>
<protein>
    <recommendedName>
        <fullName>RNA polymerase I-specific transcription initiation factor rrn3</fullName>
    </recommendedName>
</protein>
<keyword id="KW-0539">Nucleus</keyword>
<keyword id="KW-1185">Reference proteome</keyword>
<keyword id="KW-0804">Transcription</keyword>
<keyword id="KW-0805">Transcription regulation</keyword>
<comment type="function">
    <text evidence="1">Required for efficient transcription initiation by RNA polymerase I.</text>
</comment>
<comment type="subcellular location">
    <subcellularLocation>
        <location evidence="1">Nucleus</location>
    </subcellularLocation>
</comment>
<comment type="similarity">
    <text evidence="3">Belongs to the RRN3 family.</text>
</comment>
<accession>Q10110</accession>
<proteinExistence type="inferred from homology"/>
<gene>
    <name type="primary">rrn3</name>
    <name type="ORF">SPAC18G6.11c</name>
</gene>
<feature type="chain" id="PRO_0000211429" description="RNA polymerase I-specific transcription initiation factor rrn3">
    <location>
        <begin position="1"/>
        <end position="599"/>
    </location>
</feature>
<feature type="region of interest" description="Disordered" evidence="2">
    <location>
        <begin position="577"/>
        <end position="599"/>
    </location>
</feature>
<feature type="compositionally biased region" description="Acidic residues" evidence="2">
    <location>
        <begin position="577"/>
        <end position="587"/>
    </location>
</feature>